<reference evidence="5" key="1">
    <citation type="journal article" date="2000" name="Genome Res.">
        <title>Sequence diversity and genomic organization of vomeronasal receptor genes in the mouse.</title>
        <authorList>
            <person name="Del Punta K."/>
            <person name="Rothman A."/>
            <person name="Rodriguez I."/>
            <person name="Mombaerts P."/>
        </authorList>
    </citation>
    <scope>NUCLEOTIDE SEQUENCE [GENOMIC DNA]</scope>
    <source>
        <strain evidence="5">129/SvJ</strain>
    </source>
</reference>
<reference evidence="6" key="2">
    <citation type="journal article" date="2002" name="Proc. Natl. Acad. Sci. U.S.A.">
        <title>Sequence analysis of mouse vomeronasal receptor gene clusters reveals common promoter motifs and a history of recent expansion.</title>
        <authorList>
            <person name="Lane R.P."/>
            <person name="Cutforth T."/>
            <person name="Axel R."/>
            <person name="Hood L."/>
            <person name="Trask B.J."/>
        </authorList>
    </citation>
    <scope>NUCLEOTIDE SEQUENCE [GENOMIC DNA]</scope>
</reference>
<reference evidence="4" key="3">
    <citation type="journal article" date="2002" name="Nature">
        <title>Deficient pheromone responses in mice lacking a cluster of vomeronasal receptor genes.</title>
        <authorList>
            <person name="Del Punta K."/>
            <person name="Leinders-Zufall T."/>
            <person name="Rodriguez I."/>
            <person name="Jukam D."/>
            <person name="Wysocki C.J."/>
            <person name="Ogawa S."/>
            <person name="Zufall F."/>
            <person name="Mombaerts P."/>
        </authorList>
    </citation>
    <scope>PUTATIVE FUNCTION</scope>
    <scope>DISRUPTION PHENOTYPE</scope>
</reference>
<proteinExistence type="inferred from homology"/>
<accession>Q9EP79</accession>
<organism>
    <name type="scientific">Mus musculus</name>
    <name type="common">Mouse</name>
    <dbReference type="NCBI Taxonomy" id="10090"/>
    <lineage>
        <taxon>Eukaryota</taxon>
        <taxon>Metazoa</taxon>
        <taxon>Chordata</taxon>
        <taxon>Craniata</taxon>
        <taxon>Vertebrata</taxon>
        <taxon>Euteleostomi</taxon>
        <taxon>Mammalia</taxon>
        <taxon>Eutheria</taxon>
        <taxon>Euarchontoglires</taxon>
        <taxon>Glires</taxon>
        <taxon>Rodentia</taxon>
        <taxon>Myomorpha</taxon>
        <taxon>Muroidea</taxon>
        <taxon>Muridae</taxon>
        <taxon>Murinae</taxon>
        <taxon>Mus</taxon>
        <taxon>Mus</taxon>
    </lineage>
</organism>
<sequence length="309" mass="35050">MNKDHTLYCSVYIRNAFFSEIGIGISANSCLLLFHTFMFIRGHRPRLTDLPIGFVALIHLVMLLLAAYITEDFFMSSGGWDDITCKLVIFLHRFFRSLSVCATCLLSVFQAIILCPQSSHLAKLKQNSPHQLSYFFIFLSIFYTSISSHILIAAIPTQNITFVNLIYITNSCSFLPLSSSMQHTFSTLLAFRNVFVIGLMGLSTCYMATLLCRHKTRSQRLQNSKLSPKATPEQRALRTILMLMSFFLLMSTFDSIISYSRTILQGNPLPFCFQILVAHSYAAVSPLLVLSNEKRITNLLISMYEKIVL</sequence>
<name>V1R52_MOUSE</name>
<feature type="chain" id="PRO_0000239962" description="Vomeronasal type-1 receptor 52">
    <location>
        <begin position="1"/>
        <end position="309"/>
    </location>
</feature>
<feature type="topological domain" description="Extracellular" evidence="1">
    <location>
        <begin position="1"/>
        <end position="19"/>
    </location>
</feature>
<feature type="transmembrane region" description="Helical; Name=1" evidence="1">
    <location>
        <begin position="20"/>
        <end position="40"/>
    </location>
</feature>
<feature type="topological domain" description="Cytoplasmic" evidence="1">
    <location>
        <begin position="41"/>
        <end position="49"/>
    </location>
</feature>
<feature type="transmembrane region" description="Helical; Name=2" evidence="1">
    <location>
        <begin position="50"/>
        <end position="70"/>
    </location>
</feature>
<feature type="topological domain" description="Extracellular" evidence="1">
    <location>
        <begin position="71"/>
        <end position="93"/>
    </location>
</feature>
<feature type="transmembrane region" description="Helical; Name=3" evidence="1">
    <location>
        <begin position="94"/>
        <end position="114"/>
    </location>
</feature>
<feature type="topological domain" description="Cytoplasmic" evidence="1">
    <location>
        <begin position="115"/>
        <end position="134"/>
    </location>
</feature>
<feature type="transmembrane region" description="Helical; Name=4" evidence="1">
    <location>
        <begin position="135"/>
        <end position="155"/>
    </location>
</feature>
<feature type="topological domain" description="Extracellular" evidence="1">
    <location>
        <begin position="156"/>
        <end position="187"/>
    </location>
</feature>
<feature type="transmembrane region" description="Helical; Name=5" evidence="1">
    <location>
        <begin position="188"/>
        <end position="208"/>
    </location>
</feature>
<feature type="topological domain" description="Cytoplasmic" evidence="1">
    <location>
        <begin position="209"/>
        <end position="238"/>
    </location>
</feature>
<feature type="transmembrane region" description="Helical; Name=6" evidence="1">
    <location>
        <begin position="239"/>
        <end position="259"/>
    </location>
</feature>
<feature type="topological domain" description="Extracellular" evidence="1">
    <location>
        <begin position="260"/>
        <end position="268"/>
    </location>
</feature>
<feature type="transmembrane region" description="Helical; Name=7" evidence="1">
    <location>
        <begin position="269"/>
        <end position="289"/>
    </location>
</feature>
<feature type="topological domain" description="Cytoplasmic" evidence="1">
    <location>
        <begin position="290"/>
        <end position="309"/>
    </location>
</feature>
<feature type="glycosylation site" description="N-linked (GlcNAc...) asparagine" evidence="1">
    <location>
        <position position="159"/>
    </location>
</feature>
<feature type="disulfide bond" evidence="2">
    <location>
        <begin position="85"/>
        <end position="172"/>
    </location>
</feature>
<gene>
    <name type="primary">Vmn1r52</name>
    <name type="synonym">V1ra7</name>
</gene>
<protein>
    <recommendedName>
        <fullName>Vomeronasal type-1 receptor 52</fullName>
    </recommendedName>
    <alternativeName>
        <fullName>Pheromone receptor VN3</fullName>
    </alternativeName>
    <alternativeName>
        <fullName>Vomeronasal receptor 3</fullName>
    </alternativeName>
    <alternativeName>
        <fullName>Vomeronasal type-1 receptor A7</fullName>
    </alternativeName>
</protein>
<keyword id="KW-1003">Cell membrane</keyword>
<keyword id="KW-1015">Disulfide bond</keyword>
<keyword id="KW-0297">G-protein coupled receptor</keyword>
<keyword id="KW-0325">Glycoprotein</keyword>
<keyword id="KW-0472">Membrane</keyword>
<keyword id="KW-0589">Pheromone response</keyword>
<keyword id="KW-0675">Receptor</keyword>
<keyword id="KW-1185">Reference proteome</keyword>
<keyword id="KW-0807">Transducer</keyword>
<keyword id="KW-0812">Transmembrane</keyword>
<keyword id="KW-1133">Transmembrane helix</keyword>
<evidence type="ECO:0000255" key="1"/>
<evidence type="ECO:0000255" key="2">
    <source>
        <dbReference type="PROSITE-ProRule" id="PRU00521"/>
    </source>
</evidence>
<evidence type="ECO:0000269" key="3">
    <source>
    </source>
</evidence>
<evidence type="ECO:0000305" key="4"/>
<evidence type="ECO:0000312" key="5">
    <source>
        <dbReference type="EMBL" id="AAG42080.1"/>
    </source>
</evidence>
<evidence type="ECO:0000312" key="6">
    <source>
        <dbReference type="EMBL" id="AAG43250.1"/>
    </source>
</evidence>
<comment type="function">
    <text evidence="3">Putative pheromone receptor implicated in the regulation of social and reproductive behavior.</text>
</comment>
<comment type="subcellular location">
    <subcellularLocation>
        <location evidence="4">Cell membrane</location>
        <topology evidence="1">Multi-pass membrane protein</topology>
    </subcellularLocation>
</comment>
<comment type="disruption phenotype">
    <text evidence="3">Mice lacking all but one V1ra and V1rb gene (12% of the V1r repertoire) show a lack of chemosensory response to a subset of known pheromonal ligands and changes in maternal aggression as well as male reproductive behavior.</text>
</comment>
<comment type="similarity">
    <text evidence="2">Belongs to the G-protein coupled receptor 1 family.</text>
</comment>
<dbReference type="EMBL" id="AF291486">
    <property type="protein sequence ID" value="AAG42080.1"/>
    <property type="molecule type" value="Genomic_DNA"/>
</dbReference>
<dbReference type="EMBL" id="AF129005">
    <property type="protein sequence ID" value="AAG43250.1"/>
    <property type="molecule type" value="Genomic_DNA"/>
</dbReference>
<dbReference type="CCDS" id="CCDS20353.1"/>
<dbReference type="RefSeq" id="NP_444452.1">
    <property type="nucleotide sequence ID" value="NM_053222.2"/>
</dbReference>
<dbReference type="SMR" id="Q9EP79"/>
<dbReference type="GlyCosmos" id="Q9EP79">
    <property type="glycosylation" value="1 site, No reported glycans"/>
</dbReference>
<dbReference type="GlyGen" id="Q9EP79">
    <property type="glycosylation" value="1 site"/>
</dbReference>
<dbReference type="PaxDb" id="10090-ENSMUSP00000078760"/>
<dbReference type="DNASU" id="113849"/>
<dbReference type="Ensembl" id="ENSMUST00000079832.3">
    <property type="protein sequence ID" value="ENSMUSP00000078760.3"/>
    <property type="gene ID" value="ENSMUSG00000060816.4"/>
</dbReference>
<dbReference type="Ensembl" id="ENSMUST00000226520.2">
    <property type="protein sequence ID" value="ENSMUSP00000154082.2"/>
    <property type="gene ID" value="ENSMUSG00000060816.4"/>
</dbReference>
<dbReference type="Ensembl" id="ENSMUST00000227893.2">
    <property type="protein sequence ID" value="ENSMUSP00000154024.2"/>
    <property type="gene ID" value="ENSMUSG00000060816.4"/>
</dbReference>
<dbReference type="Ensembl" id="ENSMUST00000228394.2">
    <property type="protein sequence ID" value="ENSMUSP00000153951.2"/>
    <property type="gene ID" value="ENSMUSG00000060816.4"/>
</dbReference>
<dbReference type="Ensembl" id="ENSMUST00000228665.2">
    <property type="protein sequence ID" value="ENSMUSP00000154275.2"/>
    <property type="gene ID" value="ENSMUSG00000060816.4"/>
</dbReference>
<dbReference type="GeneID" id="113849"/>
<dbReference type="KEGG" id="mmu:113849"/>
<dbReference type="UCSC" id="uc009cww.1">
    <property type="organism name" value="mouse"/>
</dbReference>
<dbReference type="AGR" id="MGI:2148512"/>
<dbReference type="CTD" id="113849"/>
<dbReference type="MGI" id="MGI:2148512">
    <property type="gene designation" value="Vmn1r52"/>
</dbReference>
<dbReference type="VEuPathDB" id="HostDB:ENSMUSG00000060816"/>
<dbReference type="eggNOG" id="ENOG502SNRJ">
    <property type="taxonomic scope" value="Eukaryota"/>
</dbReference>
<dbReference type="GeneTree" id="ENSGT01030000234553"/>
<dbReference type="HOGENOM" id="CLU_058641_0_0_1"/>
<dbReference type="InParanoid" id="Q9EP79"/>
<dbReference type="OMA" id="ITCKLIM"/>
<dbReference type="OrthoDB" id="9634176at2759"/>
<dbReference type="PhylomeDB" id="Q9EP79"/>
<dbReference type="BioGRID-ORCS" id="113849">
    <property type="hits" value="3 hits in 37 CRISPR screens"/>
</dbReference>
<dbReference type="PRO" id="PR:Q9EP79"/>
<dbReference type="Proteomes" id="UP000000589">
    <property type="component" value="Chromosome 6"/>
</dbReference>
<dbReference type="RNAct" id="Q9EP79">
    <property type="molecule type" value="protein"/>
</dbReference>
<dbReference type="Bgee" id="ENSMUSG00000060816">
    <property type="expression patterns" value="Expressed in lung"/>
</dbReference>
<dbReference type="ExpressionAtlas" id="Q9EP79">
    <property type="expression patterns" value="baseline and differential"/>
</dbReference>
<dbReference type="GO" id="GO:0005886">
    <property type="term" value="C:plasma membrane"/>
    <property type="evidence" value="ECO:0007669"/>
    <property type="project" value="UniProtKB-SubCell"/>
</dbReference>
<dbReference type="GO" id="GO:0016503">
    <property type="term" value="F:pheromone receptor activity"/>
    <property type="evidence" value="ECO:0007669"/>
    <property type="project" value="InterPro"/>
</dbReference>
<dbReference type="GO" id="GO:0019236">
    <property type="term" value="P:response to pheromone"/>
    <property type="evidence" value="ECO:0007669"/>
    <property type="project" value="UniProtKB-KW"/>
</dbReference>
<dbReference type="GO" id="GO:0007606">
    <property type="term" value="P:sensory perception of chemical stimulus"/>
    <property type="evidence" value="ECO:0000304"/>
    <property type="project" value="MGI"/>
</dbReference>
<dbReference type="CDD" id="cd13949">
    <property type="entry name" value="7tm_V1R_pheromone"/>
    <property type="match status" value="1"/>
</dbReference>
<dbReference type="FunFam" id="1.20.1070.10:FF:000051">
    <property type="entry name" value="Vomeronasal type-1 receptor"/>
    <property type="match status" value="1"/>
</dbReference>
<dbReference type="Gene3D" id="1.20.1070.10">
    <property type="entry name" value="Rhodopsin 7-helix transmembrane proteins"/>
    <property type="match status" value="1"/>
</dbReference>
<dbReference type="InterPro" id="IPR017452">
    <property type="entry name" value="GPCR_Rhodpsn_7TM"/>
</dbReference>
<dbReference type="InterPro" id="IPR004072">
    <property type="entry name" value="Vmron_rcpt_1"/>
</dbReference>
<dbReference type="PANTHER" id="PTHR24062">
    <property type="entry name" value="VOMERONASAL TYPE-1 RECEPTOR"/>
    <property type="match status" value="1"/>
</dbReference>
<dbReference type="Pfam" id="PF03402">
    <property type="entry name" value="V1R"/>
    <property type="match status" value="1"/>
</dbReference>
<dbReference type="PRINTS" id="PR01534">
    <property type="entry name" value="VOMERONASL1R"/>
</dbReference>
<dbReference type="SUPFAM" id="SSF81321">
    <property type="entry name" value="Family A G protein-coupled receptor-like"/>
    <property type="match status" value="1"/>
</dbReference>
<dbReference type="PROSITE" id="PS50262">
    <property type="entry name" value="G_PROTEIN_RECEP_F1_2"/>
    <property type="match status" value="1"/>
</dbReference>